<reference key="1">
    <citation type="journal article" date="2007" name="Proc. Natl. Acad. Sci. U.S.A.">
        <title>Genome and proteome of long-chain alkane degrading Geobacillus thermodenitrificans NG80-2 isolated from a deep-subsurface oil reservoir.</title>
        <authorList>
            <person name="Feng L."/>
            <person name="Wang W."/>
            <person name="Cheng J."/>
            <person name="Ren Y."/>
            <person name="Zhao G."/>
            <person name="Gao C."/>
            <person name="Tang Y."/>
            <person name="Liu X."/>
            <person name="Han W."/>
            <person name="Peng X."/>
            <person name="Liu R."/>
            <person name="Wang L."/>
        </authorList>
    </citation>
    <scope>NUCLEOTIDE SEQUENCE [LARGE SCALE GENOMIC DNA]</scope>
    <source>
        <strain>NG80-2</strain>
    </source>
</reference>
<protein>
    <recommendedName>
        <fullName evidence="1">DNA mismatch repair protein MutL</fullName>
    </recommendedName>
</protein>
<proteinExistence type="inferred from homology"/>
<keyword id="KW-0227">DNA damage</keyword>
<keyword id="KW-0234">DNA repair</keyword>
<feature type="chain" id="PRO_1000010019" description="DNA mismatch repair protein MutL">
    <location>
        <begin position="1"/>
        <end position="645"/>
    </location>
</feature>
<sequence>MGRIHKLDDQLANKIAAGEVVERPASVVKELVENAIDAHSTAVEIELEEAGMTKIRVIDNGDGMEEEDCLLAFERHATSKIQDEHDLFRIRTLGFRGEALPSIASVSEVELVTSTGSGPGTKLVLKGGALVARERAAGRKGTDITVSNLFFNTPARLKYMKTIHTELGHAADVVNRLALAHPDVSFRLRHHGKTLLATNGSGDVRHVLAAIYGMETAKQMIPIEAESLDFTVRGYISLPEVTRASRNYMSLIVNGRYVRNIPLMKAIEAGYHTLLPIGRYPIVFLAIEMDPVLVDVNVHPAKLEVRFSKEAELNELITATIRQAFRQRTLIPSVSADSKTVKAKAEQASWTFAHRVHEPPAQPDGKAEGTSDVTAAASLASEGSLSPLPAAAQADAPAVSEEAEASVFSERRTGVVNDLPAAELKRDAEVEEEPTEACLPADEQAEEKRAVDRLPPLYPIGQLHGTYILAENEHGLYMIDQHAAQERINYEYFREKLGEVTNEVQELLVPLTFEYPADEYERIAACRDELARCGVFLEPFGPRAFLVRSHPVWFPKGKEKEIIEEMIEHVLTAKTVDIKQLREQAAIVMSCKRAIKANQHLRTDEIFALLETLRQTTDPFTCPHGRPIIVHFSTYEIEKLFKRVM</sequence>
<gene>
    <name evidence="1" type="primary">mutL</name>
    <name type="ordered locus">GTNG_1161</name>
</gene>
<name>MUTL_GEOTN</name>
<accession>A4IMI1</accession>
<organism>
    <name type="scientific">Geobacillus thermodenitrificans (strain NG80-2)</name>
    <dbReference type="NCBI Taxonomy" id="420246"/>
    <lineage>
        <taxon>Bacteria</taxon>
        <taxon>Bacillati</taxon>
        <taxon>Bacillota</taxon>
        <taxon>Bacilli</taxon>
        <taxon>Bacillales</taxon>
        <taxon>Anoxybacillaceae</taxon>
        <taxon>Geobacillus</taxon>
    </lineage>
</organism>
<evidence type="ECO:0000255" key="1">
    <source>
        <dbReference type="HAMAP-Rule" id="MF_00149"/>
    </source>
</evidence>
<comment type="function">
    <text evidence="1">This protein is involved in the repair of mismatches in DNA. It is required for dam-dependent methyl-directed DNA mismatch repair. May act as a 'molecular matchmaker', a protein that promotes the formation of a stable complex between two or more DNA-binding proteins in an ATP-dependent manner without itself being part of a final effector complex.</text>
</comment>
<comment type="similarity">
    <text evidence="1">Belongs to the DNA mismatch repair MutL/HexB family.</text>
</comment>
<dbReference type="EMBL" id="CP000557">
    <property type="protein sequence ID" value="ABO66535.1"/>
    <property type="molecule type" value="Genomic_DNA"/>
</dbReference>
<dbReference type="RefSeq" id="WP_011887175.1">
    <property type="nucleotide sequence ID" value="NC_009328.1"/>
</dbReference>
<dbReference type="SMR" id="A4IMI1"/>
<dbReference type="KEGG" id="gtn:GTNG_1161"/>
<dbReference type="eggNOG" id="COG0323">
    <property type="taxonomic scope" value="Bacteria"/>
</dbReference>
<dbReference type="HOGENOM" id="CLU_004131_4_1_9"/>
<dbReference type="Proteomes" id="UP000001578">
    <property type="component" value="Chromosome"/>
</dbReference>
<dbReference type="GO" id="GO:0032300">
    <property type="term" value="C:mismatch repair complex"/>
    <property type="evidence" value="ECO:0007669"/>
    <property type="project" value="InterPro"/>
</dbReference>
<dbReference type="GO" id="GO:0005524">
    <property type="term" value="F:ATP binding"/>
    <property type="evidence" value="ECO:0007669"/>
    <property type="project" value="InterPro"/>
</dbReference>
<dbReference type="GO" id="GO:0016887">
    <property type="term" value="F:ATP hydrolysis activity"/>
    <property type="evidence" value="ECO:0007669"/>
    <property type="project" value="InterPro"/>
</dbReference>
<dbReference type="GO" id="GO:0140664">
    <property type="term" value="F:ATP-dependent DNA damage sensor activity"/>
    <property type="evidence" value="ECO:0007669"/>
    <property type="project" value="InterPro"/>
</dbReference>
<dbReference type="GO" id="GO:0030983">
    <property type="term" value="F:mismatched DNA binding"/>
    <property type="evidence" value="ECO:0007669"/>
    <property type="project" value="InterPro"/>
</dbReference>
<dbReference type="GO" id="GO:0006298">
    <property type="term" value="P:mismatch repair"/>
    <property type="evidence" value="ECO:0007669"/>
    <property type="project" value="UniProtKB-UniRule"/>
</dbReference>
<dbReference type="CDD" id="cd16926">
    <property type="entry name" value="HATPase_MutL-MLH-PMS-like"/>
    <property type="match status" value="1"/>
</dbReference>
<dbReference type="CDD" id="cd00782">
    <property type="entry name" value="MutL_Trans"/>
    <property type="match status" value="1"/>
</dbReference>
<dbReference type="FunFam" id="3.30.1370.100:FF:000004">
    <property type="entry name" value="DNA mismatch repair endonuclease MutL"/>
    <property type="match status" value="1"/>
</dbReference>
<dbReference type="FunFam" id="3.30.565.10:FF:000003">
    <property type="entry name" value="DNA mismatch repair endonuclease MutL"/>
    <property type="match status" value="1"/>
</dbReference>
<dbReference type="Gene3D" id="3.30.230.10">
    <property type="match status" value="1"/>
</dbReference>
<dbReference type="Gene3D" id="3.30.565.10">
    <property type="entry name" value="Histidine kinase-like ATPase, C-terminal domain"/>
    <property type="match status" value="1"/>
</dbReference>
<dbReference type="Gene3D" id="3.30.1540.20">
    <property type="entry name" value="MutL, C-terminal domain, dimerisation subdomain"/>
    <property type="match status" value="1"/>
</dbReference>
<dbReference type="Gene3D" id="3.30.1370.100">
    <property type="entry name" value="MutL, C-terminal domain, regulatory subdomain"/>
    <property type="match status" value="1"/>
</dbReference>
<dbReference type="HAMAP" id="MF_00149">
    <property type="entry name" value="DNA_mis_repair"/>
    <property type="match status" value="1"/>
</dbReference>
<dbReference type="InterPro" id="IPR014762">
    <property type="entry name" value="DNA_mismatch_repair_CS"/>
</dbReference>
<dbReference type="InterPro" id="IPR020667">
    <property type="entry name" value="DNA_mismatch_repair_MutL"/>
</dbReference>
<dbReference type="InterPro" id="IPR013507">
    <property type="entry name" value="DNA_mismatch_S5_2-like"/>
</dbReference>
<dbReference type="InterPro" id="IPR036890">
    <property type="entry name" value="HATPase_C_sf"/>
</dbReference>
<dbReference type="InterPro" id="IPR002099">
    <property type="entry name" value="MutL/Mlh/PMS"/>
</dbReference>
<dbReference type="InterPro" id="IPR038973">
    <property type="entry name" value="MutL/Mlh/Pms-like"/>
</dbReference>
<dbReference type="InterPro" id="IPR014790">
    <property type="entry name" value="MutL_C"/>
</dbReference>
<dbReference type="InterPro" id="IPR042120">
    <property type="entry name" value="MutL_C_dimsub"/>
</dbReference>
<dbReference type="InterPro" id="IPR042121">
    <property type="entry name" value="MutL_C_regsub"/>
</dbReference>
<dbReference type="InterPro" id="IPR037198">
    <property type="entry name" value="MutL_C_sf"/>
</dbReference>
<dbReference type="InterPro" id="IPR020568">
    <property type="entry name" value="Ribosomal_Su5_D2-typ_SF"/>
</dbReference>
<dbReference type="InterPro" id="IPR014721">
    <property type="entry name" value="Ribsml_uS5_D2-typ_fold_subgr"/>
</dbReference>
<dbReference type="NCBIfam" id="TIGR00585">
    <property type="entry name" value="mutl"/>
    <property type="match status" value="1"/>
</dbReference>
<dbReference type="NCBIfam" id="NF000950">
    <property type="entry name" value="PRK00095.1-3"/>
    <property type="match status" value="1"/>
</dbReference>
<dbReference type="PANTHER" id="PTHR10073">
    <property type="entry name" value="DNA MISMATCH REPAIR PROTEIN MLH, PMS, MUTL"/>
    <property type="match status" value="1"/>
</dbReference>
<dbReference type="PANTHER" id="PTHR10073:SF12">
    <property type="entry name" value="DNA MISMATCH REPAIR PROTEIN MLH1"/>
    <property type="match status" value="1"/>
</dbReference>
<dbReference type="Pfam" id="PF01119">
    <property type="entry name" value="DNA_mis_repair"/>
    <property type="match status" value="1"/>
</dbReference>
<dbReference type="Pfam" id="PF13589">
    <property type="entry name" value="HATPase_c_3"/>
    <property type="match status" value="1"/>
</dbReference>
<dbReference type="Pfam" id="PF08676">
    <property type="entry name" value="MutL_C"/>
    <property type="match status" value="1"/>
</dbReference>
<dbReference type="SMART" id="SM01340">
    <property type="entry name" value="DNA_mis_repair"/>
    <property type="match status" value="1"/>
</dbReference>
<dbReference type="SMART" id="SM00853">
    <property type="entry name" value="MutL_C"/>
    <property type="match status" value="1"/>
</dbReference>
<dbReference type="SUPFAM" id="SSF55874">
    <property type="entry name" value="ATPase domain of HSP90 chaperone/DNA topoisomerase II/histidine kinase"/>
    <property type="match status" value="1"/>
</dbReference>
<dbReference type="SUPFAM" id="SSF118116">
    <property type="entry name" value="DNA mismatch repair protein MutL"/>
    <property type="match status" value="1"/>
</dbReference>
<dbReference type="SUPFAM" id="SSF54211">
    <property type="entry name" value="Ribosomal protein S5 domain 2-like"/>
    <property type="match status" value="1"/>
</dbReference>
<dbReference type="PROSITE" id="PS00058">
    <property type="entry name" value="DNA_MISMATCH_REPAIR_1"/>
    <property type="match status" value="1"/>
</dbReference>